<dbReference type="EMBL" id="CM002236">
    <property type="protein sequence ID" value="EAA35804.1"/>
    <property type="molecule type" value="Genomic_DNA"/>
</dbReference>
<dbReference type="RefSeq" id="XP_965040.1">
    <property type="nucleotide sequence ID" value="XM_959947.3"/>
</dbReference>
<dbReference type="PDB" id="6YW5">
    <property type="method" value="EM"/>
    <property type="resolution" value="2.85 A"/>
    <property type="chains" value="77=1-414"/>
</dbReference>
<dbReference type="PDB" id="6YWX">
    <property type="method" value="EM"/>
    <property type="resolution" value="3.10 A"/>
    <property type="chains" value="77=1-414"/>
</dbReference>
<dbReference type="PDBsum" id="6YW5"/>
<dbReference type="PDBsum" id="6YWX"/>
<dbReference type="EMDB" id="EMD-10958"/>
<dbReference type="EMDB" id="EMD-10978"/>
<dbReference type="SMR" id="Q7SG49"/>
<dbReference type="STRING" id="367110.Q7SG49"/>
<dbReference type="PaxDb" id="5141-EFNCRP00000007416"/>
<dbReference type="EnsemblFungi" id="EAA35804">
    <property type="protein sequence ID" value="EAA35804"/>
    <property type="gene ID" value="NCU07493"/>
</dbReference>
<dbReference type="GeneID" id="3881189"/>
<dbReference type="KEGG" id="ncr:NCU07493"/>
<dbReference type="VEuPathDB" id="FungiDB:NCU07493"/>
<dbReference type="HOGENOM" id="CLU_053748_0_0_1"/>
<dbReference type="InParanoid" id="Q7SG49"/>
<dbReference type="OMA" id="QHETPKF"/>
<dbReference type="OrthoDB" id="5365739at2759"/>
<dbReference type="Proteomes" id="UP000001805">
    <property type="component" value="Chromosome 1, Linkage Group I"/>
</dbReference>
<dbReference type="GO" id="GO:0005739">
    <property type="term" value="C:mitochondrion"/>
    <property type="evidence" value="ECO:0007669"/>
    <property type="project" value="UniProtKB-SubCell"/>
</dbReference>
<protein>
    <recommendedName>
        <fullName evidence="3">Small ribosomal subunit protein mS46</fullName>
    </recommendedName>
</protein>
<name>RSM28_NEUCR</name>
<proteinExistence type="evidence at protein level"/>
<accession>Q7SG49</accession>
<evidence type="ECO:0000256" key="1">
    <source>
        <dbReference type="SAM" id="MobiDB-lite"/>
    </source>
</evidence>
<evidence type="ECO:0000269" key="2">
    <source>
    </source>
</evidence>
<evidence type="ECO:0000303" key="3">
    <source>
    </source>
</evidence>
<evidence type="ECO:0000305" key="4"/>
<evidence type="ECO:0000305" key="5">
    <source>
    </source>
</evidence>
<evidence type="ECO:0007744" key="6">
    <source>
        <dbReference type="PDB" id="6YW5"/>
    </source>
</evidence>
<evidence type="ECO:0007744" key="7">
    <source>
        <dbReference type="PDB" id="6YWX"/>
    </source>
</evidence>
<sequence length="414" mass="43046">MNRQVVTSTLGRRGVASTILNAQQQQRPFSSTTTRCAAEDDSKKPAAAPSTPRAAAPGPISASRQKSEAAVGKLTQLRGSFTSLTNDNSFHKTLPAGARDARRLAAAPIAGKGAGAGAVAPLGGGGGASGAPKVINVRSLKGTLGSRGSNNIPGAVAPGAALRPRFAAGPGAAAGRPRFGAAASPGAGPTGAARRPPFGARRARPAGDKKRSGGSGDKRPRGDDYDAPPTEEEKAFLRGLEQGKVTEYVPKLTPDTLLGYGPPVATDAALGKVESAMRTMRILGGGLPFNDQSGVTSDPTAIKHRYVHEKKPVFFSSVEEKEWVRESLDKFAVSEGPEKKTKQKILETSVLGKYEEPKYVESLTETVKMVEKYQGGTFSYAPSDADKFNKKLNQLLAAGLPRAAPAPAQAQKKA</sequence>
<organism>
    <name type="scientific">Neurospora crassa (strain ATCC 24698 / 74-OR23-1A / CBS 708.71 / DSM 1257 / FGSC 987)</name>
    <dbReference type="NCBI Taxonomy" id="367110"/>
    <lineage>
        <taxon>Eukaryota</taxon>
        <taxon>Fungi</taxon>
        <taxon>Dikarya</taxon>
        <taxon>Ascomycota</taxon>
        <taxon>Pezizomycotina</taxon>
        <taxon>Sordariomycetes</taxon>
        <taxon>Sordariomycetidae</taxon>
        <taxon>Sordariales</taxon>
        <taxon>Sordariaceae</taxon>
        <taxon>Neurospora</taxon>
    </lineage>
</organism>
<comment type="function">
    <text evidence="5">Component of the mitochondrial ribosome (mitoribosome), a dedicated translation machinery responsible for the synthesis of mitochondrial genome-encoded proteins, including at least some of the essential transmembrane subunits of the mitochondrial respiratory chain. The mitoribosomes are attached to the mitochondrial inner membrane and translation products are cotranslationally integrated into the membrane.</text>
</comment>
<comment type="subunit">
    <text evidence="2">Component of the mitochondrial small ribosomal subunit (mt-SSU). Mature N.crassa 74S mitochondrial ribosomes consist of a small (37S) and a large (54S) subunit. The 37S small subunit contains a 16S ribosomal RNA (16S mt-rRNA) and 32 different proteins. The 54S large subunit contains a 23S rRNA (23S mt-rRNA) and 42 different proteins.</text>
</comment>
<comment type="subcellular location">
    <subcellularLocation>
        <location evidence="2">Mitochondrion</location>
    </subcellularLocation>
</comment>
<comment type="similarity">
    <text evidence="4">Belongs to the mitochondrion-specific ribosomal protein mS46 family.</text>
</comment>
<feature type="chain" id="PRO_0000458565" description="Small ribosomal subunit protein mS46">
    <location>
        <begin position="1"/>
        <end position="414"/>
    </location>
</feature>
<feature type="region of interest" description="Disordered" evidence="1">
    <location>
        <begin position="20"/>
        <end position="71"/>
    </location>
</feature>
<feature type="region of interest" description="Disordered" evidence="1">
    <location>
        <begin position="168"/>
        <end position="229"/>
    </location>
</feature>
<feature type="compositionally biased region" description="Polar residues" evidence="1">
    <location>
        <begin position="20"/>
        <end position="35"/>
    </location>
</feature>
<feature type="compositionally biased region" description="Low complexity" evidence="1">
    <location>
        <begin position="45"/>
        <end position="59"/>
    </location>
</feature>
<feature type="compositionally biased region" description="Low complexity" evidence="1">
    <location>
        <begin position="168"/>
        <end position="200"/>
    </location>
</feature>
<feature type="compositionally biased region" description="Basic and acidic residues" evidence="1">
    <location>
        <begin position="205"/>
        <end position="224"/>
    </location>
</feature>
<reference key="1">
    <citation type="journal article" date="2003" name="Nature">
        <title>The genome sequence of the filamentous fungus Neurospora crassa.</title>
        <authorList>
            <person name="Galagan J.E."/>
            <person name="Calvo S.E."/>
            <person name="Borkovich K.A."/>
            <person name="Selker E.U."/>
            <person name="Read N.D."/>
            <person name="Jaffe D.B."/>
            <person name="FitzHugh W."/>
            <person name="Ma L.-J."/>
            <person name="Smirnov S."/>
            <person name="Purcell S."/>
            <person name="Rehman B."/>
            <person name="Elkins T."/>
            <person name="Engels R."/>
            <person name="Wang S."/>
            <person name="Nielsen C.B."/>
            <person name="Butler J."/>
            <person name="Endrizzi M."/>
            <person name="Qui D."/>
            <person name="Ianakiev P."/>
            <person name="Bell-Pedersen D."/>
            <person name="Nelson M.A."/>
            <person name="Werner-Washburne M."/>
            <person name="Selitrennikoff C.P."/>
            <person name="Kinsey J.A."/>
            <person name="Braun E.L."/>
            <person name="Zelter A."/>
            <person name="Schulte U."/>
            <person name="Kothe G.O."/>
            <person name="Jedd G."/>
            <person name="Mewes H.-W."/>
            <person name="Staben C."/>
            <person name="Marcotte E."/>
            <person name="Greenberg D."/>
            <person name="Roy A."/>
            <person name="Foley K."/>
            <person name="Naylor J."/>
            <person name="Stange-Thomann N."/>
            <person name="Barrett R."/>
            <person name="Gnerre S."/>
            <person name="Kamal M."/>
            <person name="Kamvysselis M."/>
            <person name="Mauceli E.W."/>
            <person name="Bielke C."/>
            <person name="Rudd S."/>
            <person name="Frishman D."/>
            <person name="Krystofova S."/>
            <person name="Rasmussen C."/>
            <person name="Metzenberg R.L."/>
            <person name="Perkins D.D."/>
            <person name="Kroken S."/>
            <person name="Cogoni C."/>
            <person name="Macino G."/>
            <person name="Catcheside D.E.A."/>
            <person name="Li W."/>
            <person name="Pratt R.J."/>
            <person name="Osmani S.A."/>
            <person name="DeSouza C.P.C."/>
            <person name="Glass N.L."/>
            <person name="Orbach M.J."/>
            <person name="Berglund J.A."/>
            <person name="Voelker R."/>
            <person name="Yarden O."/>
            <person name="Plamann M."/>
            <person name="Seiler S."/>
            <person name="Dunlap J.C."/>
            <person name="Radford A."/>
            <person name="Aramayo R."/>
            <person name="Natvig D.O."/>
            <person name="Alex L.A."/>
            <person name="Mannhaupt G."/>
            <person name="Ebbole D.J."/>
            <person name="Freitag M."/>
            <person name="Paulsen I."/>
            <person name="Sachs M.S."/>
            <person name="Lander E.S."/>
            <person name="Nusbaum C."/>
            <person name="Birren B.W."/>
        </authorList>
    </citation>
    <scope>NUCLEOTIDE SEQUENCE [LARGE SCALE GENOMIC DNA]</scope>
    <source>
        <strain>ATCC 24698 / 74-OR23-1A / CBS 708.71 / DSM 1257 / FGSC 987</strain>
    </source>
</reference>
<reference evidence="6 7" key="2">
    <citation type="journal article" date="2020" name="Nat. Commun.">
        <title>Analysis of translating mitoribosome reveals functional characteristics of translation in mitochondria of fungi.</title>
        <authorList>
            <person name="Itoh Y."/>
            <person name="Naschberger A."/>
            <person name="Mortezaei N."/>
            <person name="Herrmann J.M."/>
            <person name="Amunts A."/>
        </authorList>
    </citation>
    <scope>STRUCTURE BY ELECTRON MICROSCOPY (2.85 ANGSTROMS)</scope>
</reference>
<keyword id="KW-0002">3D-structure</keyword>
<keyword id="KW-0496">Mitochondrion</keyword>
<keyword id="KW-1185">Reference proteome</keyword>
<gene>
    <name type="primary">rsm28</name>
    <name type="ORF">NCU07493</name>
</gene>